<keyword id="KW-0167">Capsid protein</keyword>
<keyword id="KW-1153">Inner capsid protein</keyword>
<keyword id="KW-0946">Virion</keyword>
<feature type="chain" id="PRO_0000222690" description="Outer capsid protein VP2">
    <location>
        <begin position="1"/>
        <end position="1051"/>
    </location>
</feature>
<evidence type="ECO:0000305" key="1"/>
<reference key="1">
    <citation type="journal article" date="1998" name="Virus Res.">
        <title>The complete sequence of four major structural proteins of African horse sickness virus serotype 6: evolutionary relationships within and between the orbiviruses.</title>
        <authorList>
            <person name="Williams C.F."/>
            <person name="Inoue T."/>
            <person name="Lucus A.-M."/>
            <person name="Zanotto P."/>
            <person name="Roy P."/>
        </authorList>
    </citation>
    <scope>NUCLEOTIDE SEQUENCE [MRNA]</scope>
    <source>
        <strain>Serotype 6</strain>
    </source>
</reference>
<sequence length="1051" mass="122327">MASEFGILICDKLKENTLEKTNCDVIITGVGKVGVHEEDGVLGYEWEETNYRLGLCEIENTMSISDFVYKQIRCEGAYPILPHYVTDVIKYGMVIHRNDHQIRVDRDEKSIGKIQIQPYFGDMYFSPEYYPATFIKRESLPISVDTIRGYIGARMRGIEARAGRIREGDGNLLECARRWEKAAYERIENEKALRCVAHETDPTYQILKKQRFGFVYPHYYVLNTNYNPTTVTRTSRINDWLLKEKTQGVVKTAEAFSDNAELKTLAERMEEEELTEDIIRAVIRYGAKYATRSGMREDTLSLQELDRYCDSLTTFVHKKKKDEGDDETARTIIRNQWIKGMPRMDFKKEMKITRGPIANWSFFMSIDAFKRNNKVDINPNHQTWKDHIKEVTDQMNRAQQGNNNKPLKVQIDGVSILTSEKYGTVGHWVDWVVDLIMLAQVKMLIKEYKFKRLNSQNLMSGMNKLVGALRCYAYCLILALYDYYGQDIEGFKKGSNSSAILETVIQMFPNFKQEIQANFGINLNIKDKKTIAIRRATMHSDFSSNEEYGYKFVFGWAARGEEVLSNYGDVLSDEVEELFTKLRKKEHWDKVVEDPESYFIDELYQKNPAEVFYSAGYDTDQNVVIDGKMTEGVTYFSKRFVSYWYRVEKITTKHLEFLTEENRKVAQFDFEDYKPMAIGEMGIHASTYKYESLLLGKNRGQKVNDSIALCNYDLALTNFGVSRRQDCCWISSCSAIELSMRANIIIAIFRRIEDKRYENFAKILSGLTQQQDLYFPTYKHYYLFVLQKVLRDERRIDLNRICTELFDTQRRRGILLSFTALRFWNDSEFLGDALMMNFLHRVVFEMENVDVDYGKKWHPLLVSSEKGLRVIAVDVFNSMMGVSTSGWLPYVERICSESDMRRRLNADELELKRWFFDYYATLPLERRGEPRLSFKYEGLTTWIGSNCGGVRDYVVQLLPMRKSKPGLLCIAYGDDVNVQWVEHELRDFLMHEGSLGLVVISGKMLVNKSKLRVRNLKIYNRGTLDSLFLISGGNYTFGNKFLLSKLMAKAE</sequence>
<dbReference type="EMBL" id="AF021235">
    <property type="protein sequence ID" value="AAC40994.1"/>
    <property type="molecule type" value="mRNA"/>
</dbReference>
<dbReference type="RefSeq" id="YP_052941.1">
    <property type="nucleotide sequence ID" value="NC_005996.1"/>
</dbReference>
<dbReference type="GeneID" id="2930875"/>
<dbReference type="KEGG" id="vg:2930875"/>
<dbReference type="Proteomes" id="UP000201896">
    <property type="component" value="Genome"/>
</dbReference>
<dbReference type="GO" id="GO:0039625">
    <property type="term" value="C:viral inner capsid"/>
    <property type="evidence" value="ECO:0007669"/>
    <property type="project" value="UniProtKB-KW"/>
</dbReference>
<dbReference type="GO" id="GO:0005198">
    <property type="term" value="F:structural molecule activity"/>
    <property type="evidence" value="ECO:0007669"/>
    <property type="project" value="InterPro"/>
</dbReference>
<dbReference type="InterPro" id="IPR001742">
    <property type="entry name" value="Capsid_VP2_Orbivir"/>
</dbReference>
<dbReference type="Pfam" id="PF00898">
    <property type="entry name" value="Orbi_VP2"/>
    <property type="match status" value="1"/>
</dbReference>
<organism>
    <name type="scientific">African horse sickness virus</name>
    <name type="common">AHSV</name>
    <name type="synonym">Orbivirus alphaequi</name>
    <dbReference type="NCBI Taxonomy" id="40050"/>
    <lineage>
        <taxon>Viruses</taxon>
        <taxon>Riboviria</taxon>
        <taxon>Orthornavirae</taxon>
        <taxon>Duplornaviricota</taxon>
        <taxon>Resentoviricetes</taxon>
        <taxon>Reovirales</taxon>
        <taxon>Sedoreoviridae</taxon>
        <taxon>Orbivirus</taxon>
    </lineage>
</organism>
<proteinExistence type="evidence at transcript level"/>
<name>VP2_AHSV</name>
<comment type="function">
    <text>The VP2 protein is one of the two proteins (with VP5) which constitute the virus particle outer capsid. It is the major target of the host immunogenic response.</text>
</comment>
<comment type="subcellular location">
    <subcellularLocation>
        <location evidence="1">Virion</location>
    </subcellularLocation>
</comment>
<comment type="similarity">
    <text evidence="1">Belongs to the orbivirus VP2 family.</text>
</comment>
<accession>O71024</accession>
<gene>
    <name type="primary">Segment-2</name>
    <name type="synonym">L2</name>
</gene>
<protein>
    <recommendedName>
        <fullName>Outer capsid protein VP2</fullName>
    </recommendedName>
</protein>